<dbReference type="EMBL" id="CP001339">
    <property type="protein sequence ID" value="ACL73983.1"/>
    <property type="molecule type" value="Genomic_DNA"/>
</dbReference>
<dbReference type="RefSeq" id="WP_012639446.1">
    <property type="nucleotide sequence ID" value="NC_011901.1"/>
</dbReference>
<dbReference type="SMR" id="B8GP63"/>
<dbReference type="STRING" id="396588.Tgr7_2910"/>
<dbReference type="KEGG" id="tgr:Tgr7_2910"/>
<dbReference type="eggNOG" id="COG1678">
    <property type="taxonomic scope" value="Bacteria"/>
</dbReference>
<dbReference type="HOGENOM" id="CLU_057596_1_0_6"/>
<dbReference type="OrthoDB" id="9807486at2"/>
<dbReference type="Proteomes" id="UP000002383">
    <property type="component" value="Chromosome"/>
</dbReference>
<dbReference type="GO" id="GO:0005829">
    <property type="term" value="C:cytosol"/>
    <property type="evidence" value="ECO:0007669"/>
    <property type="project" value="TreeGrafter"/>
</dbReference>
<dbReference type="Gene3D" id="3.40.1740.10">
    <property type="entry name" value="VC0467-like"/>
    <property type="match status" value="1"/>
</dbReference>
<dbReference type="HAMAP" id="MF_00758">
    <property type="entry name" value="UPF0301"/>
    <property type="match status" value="1"/>
</dbReference>
<dbReference type="InterPro" id="IPR003774">
    <property type="entry name" value="AlgH-like"/>
</dbReference>
<dbReference type="NCBIfam" id="NF001266">
    <property type="entry name" value="PRK00228.1-1"/>
    <property type="match status" value="1"/>
</dbReference>
<dbReference type="PANTHER" id="PTHR30327">
    <property type="entry name" value="UNCHARACTERIZED PROTEIN YQGE"/>
    <property type="match status" value="1"/>
</dbReference>
<dbReference type="PANTHER" id="PTHR30327:SF1">
    <property type="entry name" value="UPF0301 PROTEIN YQGE"/>
    <property type="match status" value="1"/>
</dbReference>
<dbReference type="Pfam" id="PF02622">
    <property type="entry name" value="DUF179"/>
    <property type="match status" value="1"/>
</dbReference>
<dbReference type="SUPFAM" id="SSF143456">
    <property type="entry name" value="VC0467-like"/>
    <property type="match status" value="1"/>
</dbReference>
<name>Y2910_THISH</name>
<accession>B8GP63</accession>
<comment type="similarity">
    <text evidence="1">Belongs to the UPF0301 (AlgH) family.</text>
</comment>
<keyword id="KW-1185">Reference proteome</keyword>
<protein>
    <recommendedName>
        <fullName evidence="1">UPF0301 protein Tgr7_2910</fullName>
    </recommendedName>
</protein>
<proteinExistence type="inferred from homology"/>
<sequence length="186" mass="19992">MTASSNFTNQFLIAMPGLEDPNFFHSVTYICEHNEQGAMGIVINQPTDLTLKTVLEHMDIESDAKAAEIPVFHGGPVQTDRGFVLHSPAGAWSSSMPVSEGVQVTTSRDILEAMARHEGPKDVLVALGYAGWGAGQLEQEIADNAWLTTPADLDILFRLPPDQRWQAAAARLGVDLSLISGDAGHA</sequence>
<evidence type="ECO:0000255" key="1">
    <source>
        <dbReference type="HAMAP-Rule" id="MF_00758"/>
    </source>
</evidence>
<feature type="chain" id="PRO_1000148395" description="UPF0301 protein Tgr7_2910">
    <location>
        <begin position="1"/>
        <end position="186"/>
    </location>
</feature>
<reference key="1">
    <citation type="journal article" date="2011" name="Stand. Genomic Sci.">
        <title>Complete genome sequence of 'Thioalkalivibrio sulfidophilus' HL-EbGr7.</title>
        <authorList>
            <person name="Muyzer G."/>
            <person name="Sorokin D.Y."/>
            <person name="Mavromatis K."/>
            <person name="Lapidus A."/>
            <person name="Clum A."/>
            <person name="Ivanova N."/>
            <person name="Pati A."/>
            <person name="d'Haeseleer P."/>
            <person name="Woyke T."/>
            <person name="Kyrpides N.C."/>
        </authorList>
    </citation>
    <scope>NUCLEOTIDE SEQUENCE [LARGE SCALE GENOMIC DNA]</scope>
    <source>
        <strain>HL-EbGR7</strain>
    </source>
</reference>
<gene>
    <name type="ordered locus">Tgr7_2910</name>
</gene>
<organism>
    <name type="scientific">Thioalkalivibrio sulfidiphilus (strain HL-EbGR7)</name>
    <dbReference type="NCBI Taxonomy" id="396588"/>
    <lineage>
        <taxon>Bacteria</taxon>
        <taxon>Pseudomonadati</taxon>
        <taxon>Pseudomonadota</taxon>
        <taxon>Gammaproteobacteria</taxon>
        <taxon>Chromatiales</taxon>
        <taxon>Ectothiorhodospiraceae</taxon>
        <taxon>Thioalkalivibrio</taxon>
    </lineage>
</organism>